<keyword id="KW-0002">3D-structure</keyword>
<keyword id="KW-0007">Acetylation</keyword>
<keyword id="KW-0106">Calcium</keyword>
<keyword id="KW-0903">Direct protein sequencing</keyword>
<keyword id="KW-0479">Metal-binding</keyword>
<keyword id="KW-0505">Motor protein</keyword>
<keyword id="KW-0514">Muscle protein</keyword>
<keyword id="KW-0518">Myosin</keyword>
<keyword id="KW-1185">Reference proteome</keyword>
<keyword id="KW-0677">Repeat</keyword>
<feature type="initiator methionine" description="Removed" evidence="5">
    <location>
        <position position="1"/>
    </location>
</feature>
<feature type="chain" id="PRO_0000198731" description="Myosin regulatory light chain 2, smooth muscle major isoform">
    <location>
        <begin position="2"/>
        <end position="172"/>
    </location>
</feature>
<feature type="domain" description="EF-hand 1" evidence="2">
    <location>
        <begin position="29"/>
        <end position="64"/>
    </location>
</feature>
<feature type="domain" description="EF-hand 2" evidence="2">
    <location>
        <begin position="98"/>
        <end position="133"/>
    </location>
</feature>
<feature type="domain" description="EF-hand 3" evidence="2">
    <location>
        <begin position="134"/>
        <end position="169"/>
    </location>
</feature>
<feature type="region of interest" description="Disordered" evidence="3">
    <location>
        <begin position="1"/>
        <end position="20"/>
    </location>
</feature>
<feature type="compositionally biased region" description="Basic residues" evidence="3">
    <location>
        <begin position="1"/>
        <end position="16"/>
    </location>
</feature>
<feature type="binding site" evidence="2">
    <location>
        <position position="42"/>
    </location>
    <ligand>
        <name>Ca(2+)</name>
        <dbReference type="ChEBI" id="CHEBI:29108"/>
    </ligand>
</feature>
<feature type="binding site" evidence="2">
    <location>
        <position position="44"/>
    </location>
    <ligand>
        <name>Ca(2+)</name>
        <dbReference type="ChEBI" id="CHEBI:29108"/>
    </ligand>
</feature>
<feature type="binding site" evidence="2">
    <location>
        <position position="46"/>
    </location>
    <ligand>
        <name>Ca(2+)</name>
        <dbReference type="ChEBI" id="CHEBI:29108"/>
    </ligand>
</feature>
<feature type="binding site" evidence="2">
    <location>
        <position position="53"/>
    </location>
    <ligand>
        <name>Ca(2+)</name>
        <dbReference type="ChEBI" id="CHEBI:29108"/>
    </ligand>
</feature>
<feature type="modified residue" description="N-acetylserine" evidence="4 5">
    <location>
        <position position="2"/>
    </location>
</feature>
<feature type="sequence conflict" description="In Ref. 3; AA sequence." evidence="6" ref="3">
    <original>AKAKTTKKRPQR</original>
    <variation>KRPQRAKAKTTK</variation>
    <location>
        <begin position="6"/>
        <end position="17"/>
    </location>
</feature>
<feature type="strand" evidence="7">
    <location>
        <begin position="21"/>
        <end position="23"/>
    </location>
</feature>
<feature type="helix" evidence="7">
    <location>
        <begin position="29"/>
        <end position="41"/>
    </location>
</feature>
<feature type="strand" evidence="7">
    <location>
        <begin position="46"/>
        <end position="48"/>
    </location>
</feature>
<feature type="helix" evidence="7">
    <location>
        <begin position="51"/>
        <end position="61"/>
    </location>
</feature>
<feature type="helix" evidence="7">
    <location>
        <begin position="70"/>
        <end position="76"/>
    </location>
</feature>
<feature type="helix" evidence="7">
    <location>
        <begin position="83"/>
        <end position="91"/>
    </location>
</feature>
<feature type="helix" evidence="7">
    <location>
        <begin position="100"/>
        <end position="110"/>
    </location>
</feature>
<feature type="helix" evidence="7">
    <location>
        <begin position="120"/>
        <end position="128"/>
    </location>
</feature>
<feature type="strand" evidence="7">
    <location>
        <begin position="130"/>
        <end position="132"/>
    </location>
</feature>
<feature type="helix" evidence="7">
    <location>
        <begin position="136"/>
        <end position="139"/>
    </location>
</feature>
<feature type="helix" evidence="7">
    <location>
        <begin position="141"/>
        <end position="144"/>
    </location>
</feature>
<feature type="helix" evidence="7">
    <location>
        <begin position="157"/>
        <end position="163"/>
    </location>
</feature>
<dbReference type="EMBL" id="X06387">
    <property type="protein sequence ID" value="CAA29684.1"/>
    <property type="molecule type" value="mRNA"/>
</dbReference>
<dbReference type="EMBL" id="Y00983">
    <property type="protein sequence ID" value="CAB46269.1"/>
    <property type="molecule type" value="mRNA"/>
</dbReference>
<dbReference type="PIR" id="S03184">
    <property type="entry name" value="MOCHG1"/>
</dbReference>
<dbReference type="RefSeq" id="NP_990609.1">
    <property type="nucleotide sequence ID" value="NM_205278.1"/>
</dbReference>
<dbReference type="RefSeq" id="XP_015151726.1">
    <property type="nucleotide sequence ID" value="XM_015296240.4"/>
</dbReference>
<dbReference type="RefSeq" id="XP_015151727.1">
    <property type="nucleotide sequence ID" value="XM_015296241.4"/>
</dbReference>
<dbReference type="RefSeq" id="XP_046786556.1">
    <property type="nucleotide sequence ID" value="XM_046930600.1"/>
</dbReference>
<dbReference type="RefSeq" id="XP_046786557.1">
    <property type="nucleotide sequence ID" value="XM_046930601.1"/>
</dbReference>
<dbReference type="PDB" id="3J04">
    <property type="method" value="EM"/>
    <property type="chains" value="B/E=26-168"/>
</dbReference>
<dbReference type="PDB" id="7MF3">
    <property type="method" value="EM"/>
    <property type="resolution" value="3.40 A"/>
    <property type="chains" value="D/E=2-172"/>
</dbReference>
<dbReference type="PDB" id="8SYF">
    <property type="method" value="EM"/>
    <property type="resolution" value="19.00 A"/>
    <property type="chains" value="F/G=26-168"/>
</dbReference>
<dbReference type="PDBsum" id="3J04"/>
<dbReference type="PDBsum" id="7MF3"/>
<dbReference type="PDBsum" id="8SYF"/>
<dbReference type="EMDB" id="EMD-23810"/>
<dbReference type="EMDB" id="EMD-29646"/>
<dbReference type="SMR" id="P02612"/>
<dbReference type="FunCoup" id="P02612">
    <property type="interactions" value="1645"/>
</dbReference>
<dbReference type="IntAct" id="P02612">
    <property type="interactions" value="1"/>
</dbReference>
<dbReference type="STRING" id="9031.ENSGALP00000063190"/>
<dbReference type="iPTMnet" id="P02612"/>
<dbReference type="PaxDb" id="9031-ENSGALP00000041913"/>
<dbReference type="GeneID" id="396215"/>
<dbReference type="KEGG" id="gga:396215"/>
<dbReference type="CTD" id="10398"/>
<dbReference type="VEuPathDB" id="HostDB:geneid_396215"/>
<dbReference type="eggNOG" id="KOG0031">
    <property type="taxonomic scope" value="Eukaryota"/>
</dbReference>
<dbReference type="HOGENOM" id="CLU_061288_9_3_1"/>
<dbReference type="InParanoid" id="P02612"/>
<dbReference type="OMA" id="GVNFTMF"/>
<dbReference type="OrthoDB" id="429467at2759"/>
<dbReference type="PhylomeDB" id="P02612"/>
<dbReference type="TreeFam" id="TF314218"/>
<dbReference type="Reactome" id="R-GGA-445355">
    <property type="pathway name" value="Smooth Muscle Contraction"/>
</dbReference>
<dbReference type="Reactome" id="R-GGA-5627123">
    <property type="pathway name" value="RHO GTPases activate PAKs"/>
</dbReference>
<dbReference type="EvolutionaryTrace" id="P02612"/>
<dbReference type="PRO" id="PR:P02612"/>
<dbReference type="Proteomes" id="UP000000539">
    <property type="component" value="Chromosome 20"/>
</dbReference>
<dbReference type="Bgee" id="ENSGALG00000028567">
    <property type="expression patterns" value="Expressed in colon and 11 other cell types or tissues"/>
</dbReference>
<dbReference type="GO" id="GO:0005737">
    <property type="term" value="C:cytoplasm"/>
    <property type="evidence" value="ECO:0000318"/>
    <property type="project" value="GO_Central"/>
</dbReference>
<dbReference type="GO" id="GO:0005859">
    <property type="term" value="C:muscle myosin complex"/>
    <property type="evidence" value="ECO:0000315"/>
    <property type="project" value="CAFA"/>
</dbReference>
<dbReference type="GO" id="GO:0030016">
    <property type="term" value="C:myofibril"/>
    <property type="evidence" value="ECO:0000318"/>
    <property type="project" value="GO_Central"/>
</dbReference>
<dbReference type="GO" id="GO:0016460">
    <property type="term" value="C:myosin II complex"/>
    <property type="evidence" value="ECO:0000318"/>
    <property type="project" value="GO_Central"/>
</dbReference>
<dbReference type="GO" id="GO:0001725">
    <property type="term" value="C:stress fiber"/>
    <property type="evidence" value="ECO:0000318"/>
    <property type="project" value="GO_Central"/>
</dbReference>
<dbReference type="GO" id="GO:0005509">
    <property type="term" value="F:calcium ion binding"/>
    <property type="evidence" value="ECO:0007669"/>
    <property type="project" value="InterPro"/>
</dbReference>
<dbReference type="GO" id="GO:0032036">
    <property type="term" value="F:myosin heavy chain binding"/>
    <property type="evidence" value="ECO:0000318"/>
    <property type="project" value="GO_Central"/>
</dbReference>
<dbReference type="GO" id="GO:0045159">
    <property type="term" value="F:myosin II binding"/>
    <property type="evidence" value="ECO:0000353"/>
    <property type="project" value="CAFA"/>
</dbReference>
<dbReference type="GO" id="GO:0008307">
    <property type="term" value="F:structural constituent of muscle"/>
    <property type="evidence" value="ECO:0000315"/>
    <property type="project" value="CAFA"/>
</dbReference>
<dbReference type="GO" id="GO:0030239">
    <property type="term" value="P:myofibril assembly"/>
    <property type="evidence" value="ECO:0000315"/>
    <property type="project" value="CAFA"/>
</dbReference>
<dbReference type="CDD" id="cd00051">
    <property type="entry name" value="EFh"/>
    <property type="match status" value="1"/>
</dbReference>
<dbReference type="FunFam" id="1.10.238.10:FF:000010">
    <property type="entry name" value="Myosin regulatory light chain 2, atrial isoform"/>
    <property type="match status" value="1"/>
</dbReference>
<dbReference type="FunFam" id="1.10.238.10:FF:000007">
    <property type="entry name" value="Putative myosin regulatory light chain sqh"/>
    <property type="match status" value="1"/>
</dbReference>
<dbReference type="Gene3D" id="1.10.238.10">
    <property type="entry name" value="EF-hand"/>
    <property type="match status" value="2"/>
</dbReference>
<dbReference type="InterPro" id="IPR011992">
    <property type="entry name" value="EF-hand-dom_pair"/>
</dbReference>
<dbReference type="InterPro" id="IPR018247">
    <property type="entry name" value="EF_Hand_1_Ca_BS"/>
</dbReference>
<dbReference type="InterPro" id="IPR002048">
    <property type="entry name" value="EF_hand_dom"/>
</dbReference>
<dbReference type="InterPro" id="IPR050403">
    <property type="entry name" value="Myosin_RLC"/>
</dbReference>
<dbReference type="PANTHER" id="PTHR23049">
    <property type="entry name" value="MYOSIN REGULATORY LIGHT CHAIN 2"/>
    <property type="match status" value="1"/>
</dbReference>
<dbReference type="Pfam" id="PF13499">
    <property type="entry name" value="EF-hand_7"/>
    <property type="match status" value="2"/>
</dbReference>
<dbReference type="SMART" id="SM00054">
    <property type="entry name" value="EFh"/>
    <property type="match status" value="2"/>
</dbReference>
<dbReference type="SUPFAM" id="SSF47473">
    <property type="entry name" value="EF-hand"/>
    <property type="match status" value="1"/>
</dbReference>
<dbReference type="PROSITE" id="PS00018">
    <property type="entry name" value="EF_HAND_1"/>
    <property type="match status" value="1"/>
</dbReference>
<dbReference type="PROSITE" id="PS50222">
    <property type="entry name" value="EF_HAND_2"/>
    <property type="match status" value="3"/>
</dbReference>
<evidence type="ECO:0000250" key="1"/>
<evidence type="ECO:0000255" key="2">
    <source>
        <dbReference type="PROSITE-ProRule" id="PRU00448"/>
    </source>
</evidence>
<evidence type="ECO:0000256" key="3">
    <source>
        <dbReference type="SAM" id="MobiDB-lite"/>
    </source>
</evidence>
<evidence type="ECO:0000269" key="4">
    <source>
    </source>
</evidence>
<evidence type="ECO:0000269" key="5">
    <source>
    </source>
</evidence>
<evidence type="ECO:0000305" key="6"/>
<evidence type="ECO:0007829" key="7">
    <source>
        <dbReference type="PDB" id="7MF3"/>
    </source>
</evidence>
<protein>
    <recommendedName>
        <fullName>Myosin regulatory light chain 2, smooth muscle major isoform</fullName>
        <shortName>MLC-2</shortName>
    </recommendedName>
    <alternativeName>
        <fullName>DTNB</fullName>
    </alternativeName>
    <alternativeName>
        <fullName>G1</fullName>
    </alternativeName>
    <alternativeName>
        <fullName>Isoform L20-A</fullName>
    </alternativeName>
</protein>
<organism>
    <name type="scientific">Gallus gallus</name>
    <name type="common">Chicken</name>
    <dbReference type="NCBI Taxonomy" id="9031"/>
    <lineage>
        <taxon>Eukaryota</taxon>
        <taxon>Metazoa</taxon>
        <taxon>Chordata</taxon>
        <taxon>Craniata</taxon>
        <taxon>Vertebrata</taxon>
        <taxon>Euteleostomi</taxon>
        <taxon>Archelosauria</taxon>
        <taxon>Archosauria</taxon>
        <taxon>Dinosauria</taxon>
        <taxon>Saurischia</taxon>
        <taxon>Theropoda</taxon>
        <taxon>Coelurosauria</taxon>
        <taxon>Aves</taxon>
        <taxon>Neognathae</taxon>
        <taxon>Galloanserae</taxon>
        <taxon>Galliformes</taxon>
        <taxon>Phasianidae</taxon>
        <taxon>Phasianinae</taxon>
        <taxon>Gallus</taxon>
    </lineage>
</organism>
<reference key="1">
    <citation type="journal article" date="1988" name="Nucleic Acids Res.">
        <title>The nucleotide sequence of chicken smooth muscle myosin light chain two.</title>
        <authorList>
            <person name="Zavodny P.J."/>
            <person name="Petro M.E."/>
            <person name="Kumar C.C."/>
            <person name="Dailey S.H."/>
            <person name="Lonial H.K."/>
            <person name="Narula S.K."/>
            <person name="Leibowitz P.J."/>
        </authorList>
    </citation>
    <scope>NUCLEOTIDE SEQUENCE [MRNA]</scope>
</reference>
<reference key="2">
    <citation type="journal article" date="1988" name="FEBS Lett.">
        <title>Molecular cloning and sequencing of the chicken smooth muscle myosin regulatory light chain.</title>
        <authorList>
            <person name="Messer N.G."/>
            <person name="Kendrick-Jones J."/>
        </authorList>
    </citation>
    <scope>NUCLEOTIDE SEQUENCE [MRNA]</scope>
</reference>
<reference key="3">
    <citation type="journal article" date="1981" name="Eur. J. Biochem.">
        <title>Amino-acid sequence of the 20 000-molecular-weight light chain of chicken gizzard-muscle myosin.</title>
        <authorList>
            <person name="Maita T."/>
            <person name="Chen J."/>
            <person name="Matsuda G."/>
        </authorList>
    </citation>
    <scope>PROTEIN SEQUENCE OF 2-172</scope>
    <scope>ACETYLATION AT SER-2</scope>
</reference>
<reference key="4">
    <citation type="journal article" date="1984" name="FEBS Lett.">
        <title>Phosphorylation site sequence of smooth muscle myosin light chain (Mr = 20 000).</title>
        <authorList>
            <person name="Pearson R.B."/>
            <person name="Jakes R."/>
            <person name="John M."/>
            <person name="Kendrick-Jones J."/>
            <person name="Kemp B."/>
        </authorList>
    </citation>
    <scope>SEQUENCE REVISION</scope>
</reference>
<reference key="5">
    <citation type="journal article" date="1989" name="Eur. J. Biochem.">
        <title>Two isoforms of smooth muscle myosin regulatory light chain in chicken gizzard.</title>
        <authorList>
            <person name="Inoue A."/>
            <person name="Yanagisawa M."/>
            <person name="Takano-Ohmuro H."/>
            <person name="Masaki T."/>
        </authorList>
    </citation>
    <scope>PROTEIN SEQUENCE OF 64-73</scope>
    <source>
        <tissue>Embryonic gizzard</tissue>
    </source>
</reference>
<comment type="function">
    <text evidence="1">Myosin regulatory subunit that plays an important role in regulation of both smooth muscle and nonmuscle cell contractile activity. Implicated in cytokinesis, receptor capping, and cell locomotion (By similarity).</text>
</comment>
<comment type="subunit">
    <text>Myosin is a hexamer of 2 heavy chains and 4 light chains.</text>
</comment>
<comment type="miscellaneous">
    <text>This chain binds calcium.</text>
</comment>
<accession>P02612</accession>
<sequence length="172" mass="19845">MSSKRAKAKTTKKRPQRATSNVFAMFDQSQIQEFKEAFNMIDQNRDGFIDKEDLHDMLASMGKNPTDEYLEGMMSEAPGPINFTMFLTMFGEKLNGTDPEDVIRNAFACFDEEASGFIHEDHLRELLTTMGDRFTDEEVDEMYREAPIDKKGNFNYVEFTRILKHGAKDKDD</sequence>
<proteinExistence type="evidence at protein level"/>
<name>MLRM_CHICK</name>